<sequence>MELILLEKIANLGNLGDKVNVKAGYGRNYLLPFGKATAATAANLAAFEARRAELEKLAAEKKASAETRAAQLAELEVTITATAGDEGKLFGSIGTHDIADALTASGVEVAKSEVRLPNGTIRNVGEFDVAVHLHAEVEATVRVVVVAA</sequence>
<protein>
    <recommendedName>
        <fullName evidence="1">Large ribosomal subunit protein bL9</fullName>
    </recommendedName>
    <alternativeName>
        <fullName evidence="2">50S ribosomal protein L9</fullName>
    </alternativeName>
</protein>
<accession>Q4KJ59</accession>
<proteinExistence type="inferred from homology"/>
<evidence type="ECO:0000255" key="1">
    <source>
        <dbReference type="HAMAP-Rule" id="MF_00503"/>
    </source>
</evidence>
<evidence type="ECO:0000305" key="2"/>
<reference key="1">
    <citation type="journal article" date="2005" name="Nat. Biotechnol.">
        <title>Complete genome sequence of the plant commensal Pseudomonas fluorescens Pf-5.</title>
        <authorList>
            <person name="Paulsen I.T."/>
            <person name="Press C.M."/>
            <person name="Ravel J."/>
            <person name="Kobayashi D.Y."/>
            <person name="Myers G.S.A."/>
            <person name="Mavrodi D.V."/>
            <person name="DeBoy R.T."/>
            <person name="Seshadri R."/>
            <person name="Ren Q."/>
            <person name="Madupu R."/>
            <person name="Dodson R.J."/>
            <person name="Durkin A.S."/>
            <person name="Brinkac L.M."/>
            <person name="Daugherty S.C."/>
            <person name="Sullivan S.A."/>
            <person name="Rosovitz M.J."/>
            <person name="Gwinn M.L."/>
            <person name="Zhou L."/>
            <person name="Schneider D.J."/>
            <person name="Cartinhour S.W."/>
            <person name="Nelson W.C."/>
            <person name="Weidman J."/>
            <person name="Watkins K."/>
            <person name="Tran K."/>
            <person name="Khouri H."/>
            <person name="Pierson E.A."/>
            <person name="Pierson L.S. III"/>
            <person name="Thomashow L.S."/>
            <person name="Loper J.E."/>
        </authorList>
    </citation>
    <scope>NUCLEOTIDE SEQUENCE [LARGE SCALE GENOMIC DNA]</scope>
    <source>
        <strain>ATCC BAA-477 / NRRL B-23932 / Pf-5</strain>
    </source>
</reference>
<name>RL9_PSEF5</name>
<dbReference type="EMBL" id="CP000076">
    <property type="protein sequence ID" value="AAY95989.1"/>
    <property type="molecule type" value="Genomic_DNA"/>
</dbReference>
<dbReference type="RefSeq" id="WP_007921484.1">
    <property type="nucleotide sequence ID" value="NC_004129.6"/>
</dbReference>
<dbReference type="SMR" id="Q4KJ59"/>
<dbReference type="STRING" id="220664.PFL_0582"/>
<dbReference type="GeneID" id="93401161"/>
<dbReference type="KEGG" id="pfl:PFL_0582"/>
<dbReference type="eggNOG" id="COG0359">
    <property type="taxonomic scope" value="Bacteria"/>
</dbReference>
<dbReference type="HOGENOM" id="CLU_078938_4_1_6"/>
<dbReference type="Proteomes" id="UP000008540">
    <property type="component" value="Chromosome"/>
</dbReference>
<dbReference type="GO" id="GO:1990904">
    <property type="term" value="C:ribonucleoprotein complex"/>
    <property type="evidence" value="ECO:0007669"/>
    <property type="project" value="UniProtKB-KW"/>
</dbReference>
<dbReference type="GO" id="GO:0005840">
    <property type="term" value="C:ribosome"/>
    <property type="evidence" value="ECO:0007669"/>
    <property type="project" value="UniProtKB-KW"/>
</dbReference>
<dbReference type="GO" id="GO:0019843">
    <property type="term" value="F:rRNA binding"/>
    <property type="evidence" value="ECO:0007669"/>
    <property type="project" value="UniProtKB-UniRule"/>
</dbReference>
<dbReference type="GO" id="GO:0003735">
    <property type="term" value="F:structural constituent of ribosome"/>
    <property type="evidence" value="ECO:0007669"/>
    <property type="project" value="InterPro"/>
</dbReference>
<dbReference type="GO" id="GO:0006412">
    <property type="term" value="P:translation"/>
    <property type="evidence" value="ECO:0007669"/>
    <property type="project" value="UniProtKB-UniRule"/>
</dbReference>
<dbReference type="Gene3D" id="3.10.430.100">
    <property type="entry name" value="Ribosomal protein L9, C-terminal domain"/>
    <property type="match status" value="1"/>
</dbReference>
<dbReference type="Gene3D" id="3.40.5.10">
    <property type="entry name" value="Ribosomal protein L9, N-terminal domain"/>
    <property type="match status" value="1"/>
</dbReference>
<dbReference type="HAMAP" id="MF_00503">
    <property type="entry name" value="Ribosomal_bL9"/>
    <property type="match status" value="1"/>
</dbReference>
<dbReference type="InterPro" id="IPR000244">
    <property type="entry name" value="Ribosomal_bL9"/>
</dbReference>
<dbReference type="InterPro" id="IPR009027">
    <property type="entry name" value="Ribosomal_bL9/RNase_H1_N"/>
</dbReference>
<dbReference type="InterPro" id="IPR020594">
    <property type="entry name" value="Ribosomal_bL9_bac/chp"/>
</dbReference>
<dbReference type="InterPro" id="IPR020069">
    <property type="entry name" value="Ribosomal_bL9_C"/>
</dbReference>
<dbReference type="InterPro" id="IPR036791">
    <property type="entry name" value="Ribosomal_bL9_C_sf"/>
</dbReference>
<dbReference type="InterPro" id="IPR020070">
    <property type="entry name" value="Ribosomal_bL9_N"/>
</dbReference>
<dbReference type="InterPro" id="IPR036935">
    <property type="entry name" value="Ribosomal_bL9_N_sf"/>
</dbReference>
<dbReference type="NCBIfam" id="TIGR00158">
    <property type="entry name" value="L9"/>
    <property type="match status" value="1"/>
</dbReference>
<dbReference type="PANTHER" id="PTHR21368">
    <property type="entry name" value="50S RIBOSOMAL PROTEIN L9"/>
    <property type="match status" value="1"/>
</dbReference>
<dbReference type="Pfam" id="PF03948">
    <property type="entry name" value="Ribosomal_L9_C"/>
    <property type="match status" value="1"/>
</dbReference>
<dbReference type="Pfam" id="PF01281">
    <property type="entry name" value="Ribosomal_L9_N"/>
    <property type="match status" value="1"/>
</dbReference>
<dbReference type="SUPFAM" id="SSF55658">
    <property type="entry name" value="L9 N-domain-like"/>
    <property type="match status" value="1"/>
</dbReference>
<dbReference type="SUPFAM" id="SSF55653">
    <property type="entry name" value="Ribosomal protein L9 C-domain"/>
    <property type="match status" value="1"/>
</dbReference>
<dbReference type="PROSITE" id="PS00651">
    <property type="entry name" value="RIBOSOMAL_L9"/>
    <property type="match status" value="1"/>
</dbReference>
<feature type="chain" id="PRO_0000236571" description="Large ribosomal subunit protein bL9">
    <location>
        <begin position="1"/>
        <end position="148"/>
    </location>
</feature>
<organism>
    <name type="scientific">Pseudomonas fluorescens (strain ATCC BAA-477 / NRRL B-23932 / Pf-5)</name>
    <dbReference type="NCBI Taxonomy" id="220664"/>
    <lineage>
        <taxon>Bacteria</taxon>
        <taxon>Pseudomonadati</taxon>
        <taxon>Pseudomonadota</taxon>
        <taxon>Gammaproteobacteria</taxon>
        <taxon>Pseudomonadales</taxon>
        <taxon>Pseudomonadaceae</taxon>
        <taxon>Pseudomonas</taxon>
    </lineage>
</organism>
<keyword id="KW-0687">Ribonucleoprotein</keyword>
<keyword id="KW-0689">Ribosomal protein</keyword>
<keyword id="KW-0694">RNA-binding</keyword>
<keyword id="KW-0699">rRNA-binding</keyword>
<comment type="function">
    <text evidence="1">Binds to the 23S rRNA.</text>
</comment>
<comment type="similarity">
    <text evidence="1">Belongs to the bacterial ribosomal protein bL9 family.</text>
</comment>
<gene>
    <name evidence="1" type="primary">rplI</name>
    <name type="ordered locus">PFL_0582</name>
</gene>